<organism>
    <name type="scientific">Vibrio cholerae serotype O1 (strain M66-2)</name>
    <dbReference type="NCBI Taxonomy" id="579112"/>
    <lineage>
        <taxon>Bacteria</taxon>
        <taxon>Pseudomonadati</taxon>
        <taxon>Pseudomonadota</taxon>
        <taxon>Gammaproteobacteria</taxon>
        <taxon>Vibrionales</taxon>
        <taxon>Vibrionaceae</taxon>
        <taxon>Vibrio</taxon>
    </lineage>
</organism>
<name>NDPA_VIBCM</name>
<keyword id="KW-0963">Cytoplasm</keyword>
<sequence length="333" mass="38112">MSLFLSNVILHQLRKNDNDELVVNYRAESLRNDTSTENLVAELHRVFNAKAGKGFGCFKSDSEFQLWLQEMRRGTLPFYEFSQQSAQRLKNELAKYPFADEGILVMAEYQSLATDYLFIGLLPLNQSLKVTEGLDISATDYLDINKMDIVARIDLSSYETDKESKRYLSYIKGRVGRKVADFFLDFLQADIGLDTKQQNQVLMQAVEDFCADAKFEKEEVISYKKQVYEYCNDQIKAGDEVRVQELSGELPPSNEGVNFFDFTREQGYQLEESFPADRSTVRKLTKYVGAGGGLNLSFDSLLLGERVFYDPETDTLTIKGTPPNLRDQLTRLR</sequence>
<proteinExistence type="inferred from homology"/>
<comment type="subcellular location">
    <subcellularLocation>
        <location evidence="1">Cytoplasm</location>
        <location evidence="1">Nucleoid</location>
    </subcellularLocation>
</comment>
<comment type="similarity">
    <text evidence="1">Belongs to the YejK family.</text>
</comment>
<accession>C3LNZ0</accession>
<reference key="1">
    <citation type="journal article" date="2008" name="PLoS ONE">
        <title>A recalibrated molecular clock and independent origins for the cholera pandemic clones.</title>
        <authorList>
            <person name="Feng L."/>
            <person name="Reeves P.R."/>
            <person name="Lan R."/>
            <person name="Ren Y."/>
            <person name="Gao C."/>
            <person name="Zhou Z."/>
            <person name="Ren Y."/>
            <person name="Cheng J."/>
            <person name="Wang W."/>
            <person name="Wang J."/>
            <person name="Qian W."/>
            <person name="Li D."/>
            <person name="Wang L."/>
        </authorList>
    </citation>
    <scope>NUCLEOTIDE SEQUENCE [LARGE SCALE GENOMIC DNA]</scope>
    <source>
        <strain>M66-2</strain>
    </source>
</reference>
<protein>
    <recommendedName>
        <fullName evidence="1">Nucleoid-associated protein VCM66_1963</fullName>
    </recommendedName>
</protein>
<gene>
    <name type="ordered locus">VCM66_1963</name>
</gene>
<evidence type="ECO:0000255" key="1">
    <source>
        <dbReference type="HAMAP-Rule" id="MF_00730"/>
    </source>
</evidence>
<feature type="chain" id="PRO_1000191569" description="Nucleoid-associated protein VCM66_1963">
    <location>
        <begin position="1"/>
        <end position="333"/>
    </location>
</feature>
<dbReference type="EMBL" id="CP001233">
    <property type="protein sequence ID" value="ACP06266.1"/>
    <property type="molecule type" value="Genomic_DNA"/>
</dbReference>
<dbReference type="SMR" id="C3LNZ0"/>
<dbReference type="KEGG" id="vcm:VCM66_1963"/>
<dbReference type="HOGENOM" id="CLU_063050_0_1_6"/>
<dbReference type="Proteomes" id="UP000001217">
    <property type="component" value="Chromosome I"/>
</dbReference>
<dbReference type="GO" id="GO:0043590">
    <property type="term" value="C:bacterial nucleoid"/>
    <property type="evidence" value="ECO:0007669"/>
    <property type="project" value="TreeGrafter"/>
</dbReference>
<dbReference type="GO" id="GO:0005737">
    <property type="term" value="C:cytoplasm"/>
    <property type="evidence" value="ECO:0007669"/>
    <property type="project" value="UniProtKB-UniRule"/>
</dbReference>
<dbReference type="GO" id="GO:0003690">
    <property type="term" value="F:double-stranded DNA binding"/>
    <property type="evidence" value="ECO:0007669"/>
    <property type="project" value="TreeGrafter"/>
</dbReference>
<dbReference type="GO" id="GO:0003727">
    <property type="term" value="F:single-stranded RNA binding"/>
    <property type="evidence" value="ECO:0007669"/>
    <property type="project" value="TreeGrafter"/>
</dbReference>
<dbReference type="HAMAP" id="MF_00730">
    <property type="entry name" value="NdpA"/>
    <property type="match status" value="1"/>
</dbReference>
<dbReference type="InterPro" id="IPR007358">
    <property type="entry name" value="Nucleoid_associated_NdpA"/>
</dbReference>
<dbReference type="NCBIfam" id="NF001557">
    <property type="entry name" value="PRK00378.1"/>
    <property type="match status" value="1"/>
</dbReference>
<dbReference type="PANTHER" id="PTHR38772">
    <property type="match status" value="1"/>
</dbReference>
<dbReference type="PANTHER" id="PTHR38772:SF1">
    <property type="entry name" value="NUCLEOID-ASSOCIATED PROTEIN YEJK"/>
    <property type="match status" value="1"/>
</dbReference>
<dbReference type="Pfam" id="PF04245">
    <property type="entry name" value="NA37"/>
    <property type="match status" value="1"/>
</dbReference>